<organism>
    <name type="scientific">Saccharopolyspora erythraea (strain ATCC 11635 / DSM 40517 / JCM 4748 / NBRC 13426 / NCIMB 8594 / NRRL 2338)</name>
    <dbReference type="NCBI Taxonomy" id="405948"/>
    <lineage>
        <taxon>Bacteria</taxon>
        <taxon>Bacillati</taxon>
        <taxon>Actinomycetota</taxon>
        <taxon>Actinomycetes</taxon>
        <taxon>Pseudonocardiales</taxon>
        <taxon>Pseudonocardiaceae</taxon>
        <taxon>Saccharopolyspora</taxon>
    </lineage>
</organism>
<evidence type="ECO:0000255" key="1">
    <source>
        <dbReference type="HAMAP-Rule" id="MF_01307"/>
    </source>
</evidence>
<evidence type="ECO:0000256" key="2">
    <source>
        <dbReference type="SAM" id="MobiDB-lite"/>
    </source>
</evidence>
<evidence type="ECO:0000305" key="3"/>
<proteinExistence type="inferred from homology"/>
<reference key="1">
    <citation type="journal article" date="2007" name="Nat. Biotechnol.">
        <title>Complete genome sequence of the erythromycin-producing bacterium Saccharopolyspora erythraea NRRL23338.</title>
        <authorList>
            <person name="Oliynyk M."/>
            <person name="Samborskyy M."/>
            <person name="Lester J.B."/>
            <person name="Mironenko T."/>
            <person name="Scott N."/>
            <person name="Dickens S."/>
            <person name="Haydock S.F."/>
            <person name="Leadlay P.F."/>
        </authorList>
    </citation>
    <scope>NUCLEOTIDE SEQUENCE [LARGE SCALE GENOMIC DNA]</scope>
    <source>
        <strain>ATCC 11635 / DSM 40517 / JCM 4748 / NBRC 13426 / NCIMB 8594 / NRRL 2338</strain>
    </source>
</reference>
<comment type="function">
    <text evidence="1">With S4 and S12 plays an important role in translational accuracy.</text>
</comment>
<comment type="function">
    <text evidence="1">Located at the back of the 30S subunit body where it stabilizes the conformation of the head with respect to the body.</text>
</comment>
<comment type="subunit">
    <text evidence="1">Part of the 30S ribosomal subunit. Contacts proteins S4 and S8.</text>
</comment>
<comment type="domain">
    <text>The N-terminal domain interacts with the head of the 30S subunit; the C-terminal domain interacts with the body and contacts protein S4. The interaction surface between S4 and S5 is involved in control of translational fidelity.</text>
</comment>
<comment type="similarity">
    <text evidence="1">Belongs to the universal ribosomal protein uS5 family.</text>
</comment>
<gene>
    <name evidence="1" type="primary">rpsE</name>
    <name type="ordered locus">SACE_6819</name>
</gene>
<accession>A4FPK8</accession>
<protein>
    <recommendedName>
        <fullName evidence="1">Small ribosomal subunit protein uS5</fullName>
    </recommendedName>
    <alternativeName>
        <fullName evidence="3">30S ribosomal protein S5</fullName>
    </alternativeName>
</protein>
<sequence length="203" mass="21077">MPGRTRRDGGSESGGKDRRDRRDGGRGGAAQEKTPQFERVVTINRVAKVVKGGRRFSFTALVVVGDGDGMVGVGYGKAKEVPAAIAKGVEEAKKNFFRVPRLGGTITHPVQGEDAAGVVLLRPASAGTGVIAGGPVRAVLECAGVHDVLSKSLGSDNPINIVHATVAALKQLQRPEEVAARRGLPLEDVAPAFMLRARAGQGA</sequence>
<name>RS5_SACEN</name>
<keyword id="KW-1185">Reference proteome</keyword>
<keyword id="KW-0687">Ribonucleoprotein</keyword>
<keyword id="KW-0689">Ribosomal protein</keyword>
<keyword id="KW-0694">RNA-binding</keyword>
<keyword id="KW-0699">rRNA-binding</keyword>
<feature type="chain" id="PRO_0000323190" description="Small ribosomal subunit protein uS5">
    <location>
        <begin position="1"/>
        <end position="203"/>
    </location>
</feature>
<feature type="domain" description="S5 DRBM" evidence="1">
    <location>
        <begin position="36"/>
        <end position="99"/>
    </location>
</feature>
<feature type="region of interest" description="Disordered" evidence="2">
    <location>
        <begin position="1"/>
        <end position="36"/>
    </location>
</feature>
<feature type="compositionally biased region" description="Basic and acidic residues" evidence="2">
    <location>
        <begin position="1"/>
        <end position="25"/>
    </location>
</feature>
<dbReference type="EMBL" id="AM420293">
    <property type="protein sequence ID" value="CAM05983.1"/>
    <property type="molecule type" value="Genomic_DNA"/>
</dbReference>
<dbReference type="RefSeq" id="WP_009948650.1">
    <property type="nucleotide sequence ID" value="NC_009142.1"/>
</dbReference>
<dbReference type="SMR" id="A4FPK8"/>
<dbReference type="STRING" id="405948.SACE_6819"/>
<dbReference type="KEGG" id="sen:SACE_6819"/>
<dbReference type="eggNOG" id="COG0098">
    <property type="taxonomic scope" value="Bacteria"/>
</dbReference>
<dbReference type="HOGENOM" id="CLU_065898_1_1_11"/>
<dbReference type="OrthoDB" id="9809045at2"/>
<dbReference type="Proteomes" id="UP000006728">
    <property type="component" value="Chromosome"/>
</dbReference>
<dbReference type="GO" id="GO:0015935">
    <property type="term" value="C:small ribosomal subunit"/>
    <property type="evidence" value="ECO:0007669"/>
    <property type="project" value="InterPro"/>
</dbReference>
<dbReference type="GO" id="GO:0019843">
    <property type="term" value="F:rRNA binding"/>
    <property type="evidence" value="ECO:0007669"/>
    <property type="project" value="UniProtKB-UniRule"/>
</dbReference>
<dbReference type="GO" id="GO:0003735">
    <property type="term" value="F:structural constituent of ribosome"/>
    <property type="evidence" value="ECO:0007669"/>
    <property type="project" value="InterPro"/>
</dbReference>
<dbReference type="GO" id="GO:0006412">
    <property type="term" value="P:translation"/>
    <property type="evidence" value="ECO:0007669"/>
    <property type="project" value="UniProtKB-UniRule"/>
</dbReference>
<dbReference type="FunFam" id="3.30.160.20:FF:000001">
    <property type="entry name" value="30S ribosomal protein S5"/>
    <property type="match status" value="1"/>
</dbReference>
<dbReference type="FunFam" id="3.30.230.10:FF:000002">
    <property type="entry name" value="30S ribosomal protein S5"/>
    <property type="match status" value="1"/>
</dbReference>
<dbReference type="Gene3D" id="3.30.160.20">
    <property type="match status" value="1"/>
</dbReference>
<dbReference type="Gene3D" id="3.30.230.10">
    <property type="match status" value="1"/>
</dbReference>
<dbReference type="HAMAP" id="MF_01307_B">
    <property type="entry name" value="Ribosomal_uS5_B"/>
    <property type="match status" value="1"/>
</dbReference>
<dbReference type="InterPro" id="IPR020568">
    <property type="entry name" value="Ribosomal_Su5_D2-typ_SF"/>
</dbReference>
<dbReference type="InterPro" id="IPR000851">
    <property type="entry name" value="Ribosomal_uS5"/>
</dbReference>
<dbReference type="InterPro" id="IPR005712">
    <property type="entry name" value="Ribosomal_uS5_bac-type"/>
</dbReference>
<dbReference type="InterPro" id="IPR005324">
    <property type="entry name" value="Ribosomal_uS5_C"/>
</dbReference>
<dbReference type="InterPro" id="IPR013810">
    <property type="entry name" value="Ribosomal_uS5_N"/>
</dbReference>
<dbReference type="InterPro" id="IPR018192">
    <property type="entry name" value="Ribosomal_uS5_N_CS"/>
</dbReference>
<dbReference type="InterPro" id="IPR014721">
    <property type="entry name" value="Ribsml_uS5_D2-typ_fold_subgr"/>
</dbReference>
<dbReference type="NCBIfam" id="TIGR01021">
    <property type="entry name" value="rpsE_bact"/>
    <property type="match status" value="1"/>
</dbReference>
<dbReference type="PANTHER" id="PTHR48277">
    <property type="entry name" value="MITOCHONDRIAL RIBOSOMAL PROTEIN S5"/>
    <property type="match status" value="1"/>
</dbReference>
<dbReference type="PANTHER" id="PTHR48277:SF1">
    <property type="entry name" value="MITOCHONDRIAL RIBOSOMAL PROTEIN S5"/>
    <property type="match status" value="1"/>
</dbReference>
<dbReference type="Pfam" id="PF00333">
    <property type="entry name" value="Ribosomal_S5"/>
    <property type="match status" value="1"/>
</dbReference>
<dbReference type="Pfam" id="PF03719">
    <property type="entry name" value="Ribosomal_S5_C"/>
    <property type="match status" value="1"/>
</dbReference>
<dbReference type="SUPFAM" id="SSF54768">
    <property type="entry name" value="dsRNA-binding domain-like"/>
    <property type="match status" value="1"/>
</dbReference>
<dbReference type="SUPFAM" id="SSF54211">
    <property type="entry name" value="Ribosomal protein S5 domain 2-like"/>
    <property type="match status" value="1"/>
</dbReference>
<dbReference type="PROSITE" id="PS00585">
    <property type="entry name" value="RIBOSOMAL_S5"/>
    <property type="match status" value="1"/>
</dbReference>
<dbReference type="PROSITE" id="PS50881">
    <property type="entry name" value="S5_DSRBD"/>
    <property type="match status" value="1"/>
</dbReference>